<accession>A3QGU9</accession>
<protein>
    <recommendedName>
        <fullName evidence="1">Triosephosphate isomerase</fullName>
        <shortName evidence="1">TIM</shortName>
        <shortName evidence="1">TPI</shortName>
        <ecNumber evidence="1">5.3.1.1</ecNumber>
    </recommendedName>
    <alternativeName>
        <fullName evidence="1">Triose-phosphate isomerase</fullName>
    </alternativeName>
</protein>
<reference key="1">
    <citation type="submission" date="2007-03" db="EMBL/GenBank/DDBJ databases">
        <title>Complete sequence of Shewanella loihica PV-4.</title>
        <authorList>
            <consortium name="US DOE Joint Genome Institute"/>
            <person name="Copeland A."/>
            <person name="Lucas S."/>
            <person name="Lapidus A."/>
            <person name="Barry K."/>
            <person name="Detter J.C."/>
            <person name="Glavina del Rio T."/>
            <person name="Hammon N."/>
            <person name="Israni S."/>
            <person name="Dalin E."/>
            <person name="Tice H."/>
            <person name="Pitluck S."/>
            <person name="Chain P."/>
            <person name="Malfatti S."/>
            <person name="Shin M."/>
            <person name="Vergez L."/>
            <person name="Schmutz J."/>
            <person name="Larimer F."/>
            <person name="Land M."/>
            <person name="Hauser L."/>
            <person name="Kyrpides N."/>
            <person name="Mikhailova N."/>
            <person name="Romine M.F."/>
            <person name="Serres G."/>
            <person name="Fredrickson J."/>
            <person name="Tiedje J."/>
            <person name="Richardson P."/>
        </authorList>
    </citation>
    <scope>NUCLEOTIDE SEQUENCE [LARGE SCALE GENOMIC DNA]</scope>
    <source>
        <strain>ATCC BAA-1088 / PV-4</strain>
    </source>
</reference>
<keyword id="KW-0963">Cytoplasm</keyword>
<keyword id="KW-0312">Gluconeogenesis</keyword>
<keyword id="KW-0324">Glycolysis</keyword>
<keyword id="KW-0413">Isomerase</keyword>
<keyword id="KW-1185">Reference proteome</keyword>
<proteinExistence type="inferred from homology"/>
<dbReference type="EC" id="5.3.1.1" evidence="1"/>
<dbReference type="EMBL" id="CP000606">
    <property type="protein sequence ID" value="ABO24697.1"/>
    <property type="molecule type" value="Genomic_DNA"/>
</dbReference>
<dbReference type="RefSeq" id="WP_011866628.1">
    <property type="nucleotide sequence ID" value="NC_009092.1"/>
</dbReference>
<dbReference type="SMR" id="A3QGU9"/>
<dbReference type="STRING" id="323850.Shew_2831"/>
<dbReference type="KEGG" id="slo:Shew_2831"/>
<dbReference type="eggNOG" id="COG0149">
    <property type="taxonomic scope" value="Bacteria"/>
</dbReference>
<dbReference type="HOGENOM" id="CLU_024251_2_3_6"/>
<dbReference type="OrthoDB" id="9809429at2"/>
<dbReference type="UniPathway" id="UPA00109">
    <property type="reaction ID" value="UER00189"/>
</dbReference>
<dbReference type="UniPathway" id="UPA00138"/>
<dbReference type="Proteomes" id="UP000001558">
    <property type="component" value="Chromosome"/>
</dbReference>
<dbReference type="GO" id="GO:0005829">
    <property type="term" value="C:cytosol"/>
    <property type="evidence" value="ECO:0007669"/>
    <property type="project" value="TreeGrafter"/>
</dbReference>
<dbReference type="GO" id="GO:0004807">
    <property type="term" value="F:triose-phosphate isomerase activity"/>
    <property type="evidence" value="ECO:0007669"/>
    <property type="project" value="UniProtKB-UniRule"/>
</dbReference>
<dbReference type="GO" id="GO:0006094">
    <property type="term" value="P:gluconeogenesis"/>
    <property type="evidence" value="ECO:0007669"/>
    <property type="project" value="UniProtKB-UniRule"/>
</dbReference>
<dbReference type="GO" id="GO:0046166">
    <property type="term" value="P:glyceraldehyde-3-phosphate biosynthetic process"/>
    <property type="evidence" value="ECO:0007669"/>
    <property type="project" value="TreeGrafter"/>
</dbReference>
<dbReference type="GO" id="GO:0019563">
    <property type="term" value="P:glycerol catabolic process"/>
    <property type="evidence" value="ECO:0007669"/>
    <property type="project" value="TreeGrafter"/>
</dbReference>
<dbReference type="GO" id="GO:0006096">
    <property type="term" value="P:glycolytic process"/>
    <property type="evidence" value="ECO:0007669"/>
    <property type="project" value="UniProtKB-UniRule"/>
</dbReference>
<dbReference type="CDD" id="cd00311">
    <property type="entry name" value="TIM"/>
    <property type="match status" value="1"/>
</dbReference>
<dbReference type="FunFam" id="3.20.20.70:FF:000016">
    <property type="entry name" value="Triosephosphate isomerase"/>
    <property type="match status" value="1"/>
</dbReference>
<dbReference type="Gene3D" id="3.20.20.70">
    <property type="entry name" value="Aldolase class I"/>
    <property type="match status" value="1"/>
</dbReference>
<dbReference type="HAMAP" id="MF_00147_B">
    <property type="entry name" value="TIM_B"/>
    <property type="match status" value="1"/>
</dbReference>
<dbReference type="InterPro" id="IPR013785">
    <property type="entry name" value="Aldolase_TIM"/>
</dbReference>
<dbReference type="InterPro" id="IPR035990">
    <property type="entry name" value="TIM_sf"/>
</dbReference>
<dbReference type="InterPro" id="IPR022896">
    <property type="entry name" value="TrioseP_Isoase_bac/euk"/>
</dbReference>
<dbReference type="InterPro" id="IPR000652">
    <property type="entry name" value="Triosephosphate_isomerase"/>
</dbReference>
<dbReference type="InterPro" id="IPR020861">
    <property type="entry name" value="Triosephosphate_isomerase_AS"/>
</dbReference>
<dbReference type="NCBIfam" id="TIGR00419">
    <property type="entry name" value="tim"/>
    <property type="match status" value="1"/>
</dbReference>
<dbReference type="PANTHER" id="PTHR21139">
    <property type="entry name" value="TRIOSEPHOSPHATE ISOMERASE"/>
    <property type="match status" value="1"/>
</dbReference>
<dbReference type="PANTHER" id="PTHR21139:SF42">
    <property type="entry name" value="TRIOSEPHOSPHATE ISOMERASE"/>
    <property type="match status" value="1"/>
</dbReference>
<dbReference type="Pfam" id="PF00121">
    <property type="entry name" value="TIM"/>
    <property type="match status" value="1"/>
</dbReference>
<dbReference type="SUPFAM" id="SSF51351">
    <property type="entry name" value="Triosephosphate isomerase (TIM)"/>
    <property type="match status" value="1"/>
</dbReference>
<dbReference type="PROSITE" id="PS00171">
    <property type="entry name" value="TIM_1"/>
    <property type="match status" value="1"/>
</dbReference>
<dbReference type="PROSITE" id="PS51440">
    <property type="entry name" value="TIM_2"/>
    <property type="match status" value="1"/>
</dbReference>
<evidence type="ECO:0000255" key="1">
    <source>
        <dbReference type="HAMAP-Rule" id="MF_00147"/>
    </source>
</evidence>
<comment type="function">
    <text evidence="1">Involved in the gluconeogenesis. Catalyzes stereospecifically the conversion of dihydroxyacetone phosphate (DHAP) to D-glyceraldehyde-3-phosphate (G3P).</text>
</comment>
<comment type="catalytic activity">
    <reaction evidence="1">
        <text>D-glyceraldehyde 3-phosphate = dihydroxyacetone phosphate</text>
        <dbReference type="Rhea" id="RHEA:18585"/>
        <dbReference type="ChEBI" id="CHEBI:57642"/>
        <dbReference type="ChEBI" id="CHEBI:59776"/>
        <dbReference type="EC" id="5.3.1.1"/>
    </reaction>
</comment>
<comment type="pathway">
    <text evidence="1">Carbohydrate biosynthesis; gluconeogenesis.</text>
</comment>
<comment type="pathway">
    <text evidence="1">Carbohydrate degradation; glycolysis; D-glyceraldehyde 3-phosphate from glycerone phosphate: step 1/1.</text>
</comment>
<comment type="subunit">
    <text evidence="1">Homodimer.</text>
</comment>
<comment type="subcellular location">
    <subcellularLocation>
        <location evidence="1">Cytoplasm</location>
    </subcellularLocation>
</comment>
<comment type="similarity">
    <text evidence="1">Belongs to the triosephosphate isomerase family.</text>
</comment>
<feature type="chain" id="PRO_0000307555" description="Triosephosphate isomerase">
    <location>
        <begin position="1"/>
        <end position="260"/>
    </location>
</feature>
<feature type="active site" description="Electrophile" evidence="1">
    <location>
        <position position="103"/>
    </location>
</feature>
<feature type="active site" description="Proton acceptor" evidence="1">
    <location>
        <position position="175"/>
    </location>
</feature>
<feature type="binding site" evidence="1">
    <location>
        <begin position="11"/>
        <end position="13"/>
    </location>
    <ligand>
        <name>substrate</name>
    </ligand>
</feature>
<feature type="binding site" evidence="1">
    <location>
        <position position="181"/>
    </location>
    <ligand>
        <name>substrate</name>
    </ligand>
</feature>
<feature type="binding site" evidence="1">
    <location>
        <position position="220"/>
    </location>
    <ligand>
        <name>substrate</name>
    </ligand>
</feature>
<feature type="binding site" evidence="1">
    <location>
        <begin position="241"/>
        <end position="242"/>
    </location>
    <ligand>
        <name>substrate</name>
    </ligand>
</feature>
<organism>
    <name type="scientific">Shewanella loihica (strain ATCC BAA-1088 / PV-4)</name>
    <dbReference type="NCBI Taxonomy" id="323850"/>
    <lineage>
        <taxon>Bacteria</taxon>
        <taxon>Pseudomonadati</taxon>
        <taxon>Pseudomonadota</taxon>
        <taxon>Gammaproteobacteria</taxon>
        <taxon>Alteromonadales</taxon>
        <taxon>Shewanellaceae</taxon>
        <taxon>Shewanella</taxon>
    </lineage>
</organism>
<sequence length="260" mass="28105">MALRRPMVAGNWKMNGTAQLAQELFTKFATKLQNDSAEVVLCPPSIFLESVRQQLDANKEALNGCLVRMGAQNLSQHDFGAYTGEVSGQMLKDSGCRYVIIGHSERRRMYGETSDIVAEKFAAAQKHGLTPILCVGESGPAREARRTFEVIAEELDVVIEKNGTMAFDNAIIAYEPLWAVGTGKSATPEQAQEVHAFIRKRLSEVSPYIGENIRILYGGSVTPSNAADLFAQPDVDGGLIGGASLNSTEFLSLCSIAMSA</sequence>
<name>TPIS_SHELP</name>
<gene>
    <name evidence="1" type="primary">tpiA</name>
    <name type="ordered locus">Shew_2831</name>
</gene>